<name>VEMP_CVHN1</name>
<feature type="chain" id="PRO_0000297812" description="Envelope small membrane protein">
    <location>
        <begin position="1"/>
        <end position="82"/>
    </location>
</feature>
<feature type="topological domain" description="Virion surface" evidence="1">
    <location>
        <begin position="1"/>
        <end position="16"/>
    </location>
</feature>
<feature type="transmembrane region" description="Helical" evidence="1">
    <location>
        <begin position="17"/>
        <end position="37"/>
    </location>
</feature>
<feature type="topological domain" description="Intravirion" evidence="1">
    <location>
        <begin position="38"/>
        <end position="79"/>
    </location>
</feature>
<organism>
    <name type="scientific">Human coronavirus HKU1 (isolate N1)</name>
    <name type="common">HCoV-HKU1</name>
    <dbReference type="NCBI Taxonomy" id="443239"/>
    <lineage>
        <taxon>Viruses</taxon>
        <taxon>Riboviria</taxon>
        <taxon>Orthornavirae</taxon>
        <taxon>Pisuviricota</taxon>
        <taxon>Pisoniviricetes</taxon>
        <taxon>Nidovirales</taxon>
        <taxon>Cornidovirineae</taxon>
        <taxon>Coronaviridae</taxon>
        <taxon>Orthocoronavirinae</taxon>
        <taxon>Betacoronavirus</taxon>
        <taxon>Embecovirus</taxon>
        <taxon>Human coronavirus HKU1</taxon>
    </lineage>
</organism>
<proteinExistence type="inferred from homology"/>
<protein>
    <recommendedName>
        <fullName evidence="1">Envelope small membrane protein</fullName>
        <shortName evidence="1">E protein</shortName>
        <shortName evidence="1">sM protein</shortName>
    </recommendedName>
</protein>
<evidence type="ECO:0000255" key="1">
    <source>
        <dbReference type="HAMAP-Rule" id="MF_04204"/>
    </source>
</evidence>
<keyword id="KW-0053">Apoptosis</keyword>
<keyword id="KW-1040">Host Golgi apparatus</keyword>
<keyword id="KW-1043">Host membrane</keyword>
<keyword id="KW-0472">Membrane</keyword>
<keyword id="KW-0812">Transmembrane</keyword>
<keyword id="KW-1133">Transmembrane helix</keyword>
<accession>Q5MQC8</accession>
<comment type="function">
    <text evidence="1">Plays a central role in virus morphogenesis and assembly. Acts as a viroporin and self-assembles in host membranes forming pentameric protein-lipid pores that allow ion transport. Also plays a role in the induction of apoptosis.</text>
</comment>
<comment type="subunit">
    <text evidence="1">Homopentamer. Interacts with membrane protein M in the budding compartment of the host cell, which is located between endoplasmic reticulum and the Golgi complex. Interacts with Nucleoprotein.</text>
</comment>
<comment type="subcellular location">
    <subcellularLocation>
        <location evidence="1">Host Golgi apparatus membrane</location>
        <topology evidence="1">Single-pass type III membrane protein</topology>
    </subcellularLocation>
    <text evidence="1">The cytoplasmic tail functions as a Golgi complex-targeting signal.</text>
</comment>
<comment type="miscellaneous">
    <text>Isolate N1 belongs to genotype A.</text>
</comment>
<comment type="similarity">
    <text evidence="1">Belongs to the betacoronaviruses E protein family.</text>
</comment>
<sequence>MVDLFFNDTAWYIGQILVLVLFCLISLIFVVAFLATIKLCMQLCGFCNFFIISPSAYVYKRGMQLYKSYSEQVIPPTSDYLI</sequence>
<organismHost>
    <name type="scientific">Homo sapiens</name>
    <name type="common">Human</name>
    <dbReference type="NCBI Taxonomy" id="9606"/>
</organismHost>
<dbReference type="EMBL" id="AY597011">
    <property type="protein sequence ID" value="AAT98583.1"/>
    <property type="molecule type" value="Genomic_RNA"/>
</dbReference>
<dbReference type="RefSeq" id="YP_173240.1">
    <property type="nucleotide sequence ID" value="NC_006577.2"/>
</dbReference>
<dbReference type="GeneID" id="3200430"/>
<dbReference type="KEGG" id="vg:3200430"/>
<dbReference type="Proteomes" id="UP000008170">
    <property type="component" value="Segment"/>
</dbReference>
<dbReference type="GO" id="GO:0044178">
    <property type="term" value="C:host cell Golgi membrane"/>
    <property type="evidence" value="ECO:0007669"/>
    <property type="project" value="UniProtKB-SubCell"/>
</dbReference>
<dbReference type="GO" id="GO:0016020">
    <property type="term" value="C:membrane"/>
    <property type="evidence" value="ECO:0007669"/>
    <property type="project" value="UniProtKB-UniRule"/>
</dbReference>
<dbReference type="GO" id="GO:0140975">
    <property type="term" value="P:disruption of cellular anatomical structure in another organism"/>
    <property type="evidence" value="ECO:0007669"/>
    <property type="project" value="UniProtKB-UniRule"/>
</dbReference>
<dbReference type="GO" id="GO:0046760">
    <property type="term" value="P:viral budding from Golgi membrane"/>
    <property type="evidence" value="ECO:0007669"/>
    <property type="project" value="UniProtKB-UniRule"/>
</dbReference>
<dbReference type="HAMAP" id="MF_04204">
    <property type="entry name" value="BETA_CORONA_E"/>
    <property type="match status" value="1"/>
</dbReference>
<dbReference type="InterPro" id="IPR043506">
    <property type="entry name" value="E_protein_bCoV"/>
</dbReference>
<dbReference type="InterPro" id="IPR003873">
    <property type="entry name" value="E_protein_CoV"/>
</dbReference>
<dbReference type="Pfam" id="PF02723">
    <property type="entry name" value="CoV_E"/>
    <property type="match status" value="1"/>
</dbReference>
<dbReference type="PROSITE" id="PS51926">
    <property type="entry name" value="COV_E"/>
    <property type="match status" value="1"/>
</dbReference>
<gene>
    <name evidence="1" type="primary">E</name>
    <name type="synonym">sM</name>
    <name type="ORF">5</name>
</gene>
<reference key="1">
    <citation type="journal article" date="2005" name="J. Virol.">
        <title>Characterization and complete genome sequence of a novel coronavirus, coronavirus HKU1, from patients with pneumonia.</title>
        <authorList>
            <person name="Woo P.C.Y."/>
            <person name="Lau S.K.P."/>
            <person name="Chu C.-M."/>
            <person name="Chan K.-H."/>
            <person name="Tsoi H.-W."/>
            <person name="Huang Y."/>
            <person name="Wong B.H.L."/>
            <person name="Poon R.W.S."/>
            <person name="Cai J.J."/>
            <person name="Luk W.-K."/>
            <person name="Poon L.L.M."/>
            <person name="Wong S.S.Y."/>
            <person name="Guan Y."/>
            <person name="Peiris J.S.M."/>
            <person name="Yuen K.-Y."/>
        </authorList>
    </citation>
    <scope>NUCLEOTIDE SEQUENCE [GENOMIC RNA]</scope>
</reference>